<name>GUAA_DEBHA</name>
<protein>
    <recommendedName>
        <fullName>GMP synthase [glutamine-hydrolyzing]</fullName>
        <ecNumber evidence="1">6.3.5.2</ecNumber>
    </recommendedName>
    <alternativeName>
        <fullName>GMP synthetase</fullName>
    </alternativeName>
    <alternativeName>
        <fullName>Glutamine amidotransferase</fullName>
    </alternativeName>
</protein>
<sequence length="529" mass="58792">MVNPADVPIEVSKVFDTILVLDFGSQYSHLITRRLREFNVYAEMLPCTQKISELTWKPKGIILSGGPYSVYEDGSPHVDHDIFKLNVPILGICYGMQELAWINGKGVARGDKREYGPATLNVEDSSCSLFKGVDHSQVWMSHGDKLHALPTGFKVVATSDNSPFAAISNEKENIFGIQFHPEVTHTKQGKVLLRNFAIDICQASNNWTMENFIDTEIARIQKLVGPTAEVIGAVSGGVDSTVGAKIMKEAIGDRFHAIYVDNGLMRLNETEQVYKTLTEGLGINLTVVDATDLFLGKLQGVTDPEKKRKIIGNNFIHVFEAEAAKIKPASGQEIEYLLQGTLYPDVIESISFKGPSQTIKTHHNVGGLLEDMKLKLIEPLRELFKDEVRHLGEIMGVPHDLVWRHPFPGPGLAIRVLGEVTREQLKIAREADNIFIEEIRKAGLYKDISQAFAALLPVKSVGVMGDQRTYEQVIALRAIETTDFMTADWFVFEAAFLKKTASRIVNEVDGVARVTYDITSKPPATVEWE</sequence>
<organism>
    <name type="scientific">Debaryomyces hansenii (strain ATCC 36239 / CBS 767 / BCRC 21394 / JCM 1990 / NBRC 0083 / IGC 2968)</name>
    <name type="common">Yeast</name>
    <name type="synonym">Torulaspora hansenii</name>
    <dbReference type="NCBI Taxonomy" id="284592"/>
    <lineage>
        <taxon>Eukaryota</taxon>
        <taxon>Fungi</taxon>
        <taxon>Dikarya</taxon>
        <taxon>Ascomycota</taxon>
        <taxon>Saccharomycotina</taxon>
        <taxon>Pichiomycetes</taxon>
        <taxon>Debaryomycetaceae</taxon>
        <taxon>Debaryomyces</taxon>
    </lineage>
</organism>
<proteinExistence type="inferred from homology"/>
<comment type="function">
    <text evidence="1">Catalyzes the conversion of xanthine monophosphate (XMP) to GMP in the presence of glutamine and ATP through an adenyl-XMP intermediate.</text>
</comment>
<comment type="catalytic activity">
    <reaction evidence="1">
        <text>XMP + L-glutamine + ATP + H2O = GMP + L-glutamate + AMP + diphosphate + 2 H(+)</text>
        <dbReference type="Rhea" id="RHEA:11680"/>
        <dbReference type="ChEBI" id="CHEBI:15377"/>
        <dbReference type="ChEBI" id="CHEBI:15378"/>
        <dbReference type="ChEBI" id="CHEBI:29985"/>
        <dbReference type="ChEBI" id="CHEBI:30616"/>
        <dbReference type="ChEBI" id="CHEBI:33019"/>
        <dbReference type="ChEBI" id="CHEBI:57464"/>
        <dbReference type="ChEBI" id="CHEBI:58115"/>
        <dbReference type="ChEBI" id="CHEBI:58359"/>
        <dbReference type="ChEBI" id="CHEBI:456215"/>
        <dbReference type="EC" id="6.3.5.2"/>
    </reaction>
</comment>
<comment type="cofactor">
    <cofactor evidence="3">
        <name>Mg(2+)</name>
        <dbReference type="ChEBI" id="CHEBI:18420"/>
    </cofactor>
</comment>
<comment type="pathway">
    <text evidence="1">Purine metabolism; GMP biosynthesis; GMP from XMP (L-Gln route): step 1/1.</text>
</comment>
<comment type="subunit">
    <text evidence="3">Homodimer.</text>
</comment>
<comment type="subcellular location">
    <subcellularLocation>
        <location evidence="4">Cytoplasm</location>
        <location evidence="4">Cytosol</location>
    </subcellularLocation>
</comment>
<keyword id="KW-0067">ATP-binding</keyword>
<keyword id="KW-0963">Cytoplasm</keyword>
<keyword id="KW-0315">Glutamine amidotransferase</keyword>
<keyword id="KW-0332">GMP biosynthesis</keyword>
<keyword id="KW-0436">Ligase</keyword>
<keyword id="KW-0460">Magnesium</keyword>
<keyword id="KW-0547">Nucleotide-binding</keyword>
<keyword id="KW-0658">Purine biosynthesis</keyword>
<keyword id="KW-1185">Reference proteome</keyword>
<evidence type="ECO:0000250" key="1">
    <source>
        <dbReference type="UniProtKB" id="P38625"/>
    </source>
</evidence>
<evidence type="ECO:0000250" key="2">
    <source>
        <dbReference type="UniProtKB" id="P49915"/>
    </source>
</evidence>
<evidence type="ECO:0000250" key="3">
    <source>
        <dbReference type="UniProtKB" id="Q4WFT3"/>
    </source>
</evidence>
<evidence type="ECO:0000250" key="4">
    <source>
        <dbReference type="UniProtKB" id="Q9P772"/>
    </source>
</evidence>
<evidence type="ECO:0000255" key="5">
    <source>
        <dbReference type="PROSITE-ProRule" id="PRU00605"/>
    </source>
</evidence>
<evidence type="ECO:0000255" key="6">
    <source>
        <dbReference type="PROSITE-ProRule" id="PRU00886"/>
    </source>
</evidence>
<gene>
    <name type="primary">GUA1</name>
    <name type="ordered locus">DEHA2F11110g</name>
</gene>
<feature type="chain" id="PRO_0000286148" description="GMP synthase [glutamine-hydrolyzing]">
    <location>
        <begin position="1"/>
        <end position="529"/>
    </location>
</feature>
<feature type="domain" description="Glutamine amidotransferase type-1" evidence="5">
    <location>
        <begin position="17"/>
        <end position="206"/>
    </location>
</feature>
<feature type="domain" description="GMPS ATP-PPase" evidence="6">
    <location>
        <begin position="207"/>
        <end position="404"/>
    </location>
</feature>
<feature type="active site" description="Nucleophile" evidence="5">
    <location>
        <position position="93"/>
    </location>
</feature>
<feature type="active site" evidence="5">
    <location>
        <position position="180"/>
    </location>
</feature>
<feature type="active site" evidence="5">
    <location>
        <position position="182"/>
    </location>
</feature>
<feature type="binding site" evidence="6">
    <location>
        <begin position="235"/>
        <end position="241"/>
    </location>
    <ligand>
        <name>ATP</name>
        <dbReference type="ChEBI" id="CHEBI:30616"/>
    </ligand>
</feature>
<feature type="binding site" evidence="2">
    <location>
        <position position="308"/>
    </location>
    <ligand>
        <name>XMP</name>
        <dbReference type="ChEBI" id="CHEBI:57464"/>
    </ligand>
</feature>
<feature type="binding site" evidence="2">
    <location>
        <position position="466"/>
    </location>
    <ligand>
        <name>XMP</name>
        <dbReference type="ChEBI" id="CHEBI:57464"/>
    </ligand>
</feature>
<feature type="binding site" evidence="2">
    <location>
        <position position="521"/>
    </location>
    <ligand>
        <name>XMP</name>
        <dbReference type="ChEBI" id="CHEBI:57464"/>
    </ligand>
</feature>
<feature type="binding site" evidence="2">
    <location>
        <position position="527"/>
    </location>
    <ligand>
        <name>XMP</name>
        <dbReference type="ChEBI" id="CHEBI:57464"/>
    </ligand>
</feature>
<dbReference type="EC" id="6.3.5.2" evidence="1"/>
<dbReference type="EMBL" id="CR382138">
    <property type="protein sequence ID" value="CAG89193.1"/>
    <property type="molecule type" value="Genomic_DNA"/>
</dbReference>
<dbReference type="RefSeq" id="XP_460848.1">
    <property type="nucleotide sequence ID" value="XM_460848.1"/>
</dbReference>
<dbReference type="SMR" id="Q6BLS3"/>
<dbReference type="FunCoup" id="Q6BLS3">
    <property type="interactions" value="1113"/>
</dbReference>
<dbReference type="STRING" id="284592.Q6BLS3"/>
<dbReference type="MEROPS" id="C26.957"/>
<dbReference type="GeneID" id="2903588"/>
<dbReference type="KEGG" id="dha:DEHA2F11110g"/>
<dbReference type="VEuPathDB" id="FungiDB:DEHA2F11110g"/>
<dbReference type="eggNOG" id="KOG1622">
    <property type="taxonomic scope" value="Eukaryota"/>
</dbReference>
<dbReference type="HOGENOM" id="CLU_014340_0_5_1"/>
<dbReference type="InParanoid" id="Q6BLS3"/>
<dbReference type="OMA" id="IWQSFAV"/>
<dbReference type="OrthoDB" id="1724632at2759"/>
<dbReference type="UniPathway" id="UPA00189">
    <property type="reaction ID" value="UER00296"/>
</dbReference>
<dbReference type="Proteomes" id="UP000000599">
    <property type="component" value="Chromosome F"/>
</dbReference>
<dbReference type="GO" id="GO:0005829">
    <property type="term" value="C:cytosol"/>
    <property type="evidence" value="ECO:0007669"/>
    <property type="project" value="UniProtKB-SubCell"/>
</dbReference>
<dbReference type="GO" id="GO:0005524">
    <property type="term" value="F:ATP binding"/>
    <property type="evidence" value="ECO:0007669"/>
    <property type="project" value="UniProtKB-KW"/>
</dbReference>
<dbReference type="GO" id="GO:0003922">
    <property type="term" value="F:GMP synthase (glutamine-hydrolyzing) activity"/>
    <property type="evidence" value="ECO:0000250"/>
    <property type="project" value="UniProtKB"/>
</dbReference>
<dbReference type="GO" id="GO:0003921">
    <property type="term" value="F:GMP synthase activity"/>
    <property type="evidence" value="ECO:0007669"/>
    <property type="project" value="InterPro"/>
</dbReference>
<dbReference type="GO" id="GO:0006177">
    <property type="term" value="P:GMP biosynthetic process"/>
    <property type="evidence" value="ECO:0000250"/>
    <property type="project" value="UniProtKB"/>
</dbReference>
<dbReference type="CDD" id="cd01742">
    <property type="entry name" value="GATase1_GMP_Synthase"/>
    <property type="match status" value="1"/>
</dbReference>
<dbReference type="CDD" id="cd01997">
    <property type="entry name" value="GMP_synthase_C"/>
    <property type="match status" value="1"/>
</dbReference>
<dbReference type="FunFam" id="3.30.300.10:FF:000002">
    <property type="entry name" value="GMP synthase [glutamine-hydrolyzing]"/>
    <property type="match status" value="1"/>
</dbReference>
<dbReference type="FunFam" id="3.40.50.620:FF:000001">
    <property type="entry name" value="GMP synthase [glutamine-hydrolyzing]"/>
    <property type="match status" value="1"/>
</dbReference>
<dbReference type="FunFam" id="3.40.50.880:FF:000001">
    <property type="entry name" value="GMP synthase [glutamine-hydrolyzing]"/>
    <property type="match status" value="1"/>
</dbReference>
<dbReference type="Gene3D" id="3.30.300.10">
    <property type="match status" value="1"/>
</dbReference>
<dbReference type="Gene3D" id="3.40.50.880">
    <property type="match status" value="1"/>
</dbReference>
<dbReference type="Gene3D" id="3.40.50.620">
    <property type="entry name" value="HUPs"/>
    <property type="match status" value="1"/>
</dbReference>
<dbReference type="HAMAP" id="MF_00344">
    <property type="entry name" value="GMP_synthase"/>
    <property type="match status" value="1"/>
</dbReference>
<dbReference type="InterPro" id="IPR029062">
    <property type="entry name" value="Class_I_gatase-like"/>
</dbReference>
<dbReference type="InterPro" id="IPR017926">
    <property type="entry name" value="GATASE"/>
</dbReference>
<dbReference type="InterPro" id="IPR001674">
    <property type="entry name" value="GMP_synth_C"/>
</dbReference>
<dbReference type="InterPro" id="IPR004739">
    <property type="entry name" value="GMP_synth_GATase"/>
</dbReference>
<dbReference type="InterPro" id="IPR022955">
    <property type="entry name" value="GMP_synthase"/>
</dbReference>
<dbReference type="InterPro" id="IPR025777">
    <property type="entry name" value="GMPS_ATP_PPase_dom"/>
</dbReference>
<dbReference type="InterPro" id="IPR022310">
    <property type="entry name" value="NAD/GMP_synthase"/>
</dbReference>
<dbReference type="InterPro" id="IPR014729">
    <property type="entry name" value="Rossmann-like_a/b/a_fold"/>
</dbReference>
<dbReference type="NCBIfam" id="TIGR00884">
    <property type="entry name" value="guaA_Cterm"/>
    <property type="match status" value="1"/>
</dbReference>
<dbReference type="NCBIfam" id="TIGR00888">
    <property type="entry name" value="guaA_Nterm"/>
    <property type="match status" value="1"/>
</dbReference>
<dbReference type="NCBIfam" id="NF000848">
    <property type="entry name" value="PRK00074.1"/>
    <property type="match status" value="1"/>
</dbReference>
<dbReference type="PANTHER" id="PTHR11922:SF2">
    <property type="entry name" value="GMP SYNTHASE [GLUTAMINE-HYDROLYZING]"/>
    <property type="match status" value="1"/>
</dbReference>
<dbReference type="PANTHER" id="PTHR11922">
    <property type="entry name" value="GMP SYNTHASE-RELATED"/>
    <property type="match status" value="1"/>
</dbReference>
<dbReference type="Pfam" id="PF00117">
    <property type="entry name" value="GATase"/>
    <property type="match status" value="1"/>
</dbReference>
<dbReference type="Pfam" id="PF00958">
    <property type="entry name" value="GMP_synt_C"/>
    <property type="match status" value="1"/>
</dbReference>
<dbReference type="Pfam" id="PF02540">
    <property type="entry name" value="NAD_synthase"/>
    <property type="match status" value="1"/>
</dbReference>
<dbReference type="PRINTS" id="PR00097">
    <property type="entry name" value="ANTSNTHASEII"/>
</dbReference>
<dbReference type="PRINTS" id="PR00096">
    <property type="entry name" value="GATASE"/>
</dbReference>
<dbReference type="SUPFAM" id="SSF52402">
    <property type="entry name" value="Adenine nucleotide alpha hydrolases-like"/>
    <property type="match status" value="1"/>
</dbReference>
<dbReference type="SUPFAM" id="SSF52317">
    <property type="entry name" value="Class I glutamine amidotransferase-like"/>
    <property type="match status" value="1"/>
</dbReference>
<dbReference type="SUPFAM" id="SSF54810">
    <property type="entry name" value="GMP synthetase C-terminal dimerisation domain"/>
    <property type="match status" value="1"/>
</dbReference>
<dbReference type="PROSITE" id="PS51273">
    <property type="entry name" value="GATASE_TYPE_1"/>
    <property type="match status" value="1"/>
</dbReference>
<dbReference type="PROSITE" id="PS51553">
    <property type="entry name" value="GMPS_ATP_PPASE"/>
    <property type="match status" value="1"/>
</dbReference>
<reference key="1">
    <citation type="journal article" date="2004" name="Nature">
        <title>Genome evolution in yeasts.</title>
        <authorList>
            <person name="Dujon B."/>
            <person name="Sherman D."/>
            <person name="Fischer G."/>
            <person name="Durrens P."/>
            <person name="Casaregola S."/>
            <person name="Lafontaine I."/>
            <person name="de Montigny J."/>
            <person name="Marck C."/>
            <person name="Neuveglise C."/>
            <person name="Talla E."/>
            <person name="Goffard N."/>
            <person name="Frangeul L."/>
            <person name="Aigle M."/>
            <person name="Anthouard V."/>
            <person name="Babour A."/>
            <person name="Barbe V."/>
            <person name="Barnay S."/>
            <person name="Blanchin S."/>
            <person name="Beckerich J.-M."/>
            <person name="Beyne E."/>
            <person name="Bleykasten C."/>
            <person name="Boisrame A."/>
            <person name="Boyer J."/>
            <person name="Cattolico L."/>
            <person name="Confanioleri F."/>
            <person name="de Daruvar A."/>
            <person name="Despons L."/>
            <person name="Fabre E."/>
            <person name="Fairhead C."/>
            <person name="Ferry-Dumazet H."/>
            <person name="Groppi A."/>
            <person name="Hantraye F."/>
            <person name="Hennequin C."/>
            <person name="Jauniaux N."/>
            <person name="Joyet P."/>
            <person name="Kachouri R."/>
            <person name="Kerrest A."/>
            <person name="Koszul R."/>
            <person name="Lemaire M."/>
            <person name="Lesur I."/>
            <person name="Ma L."/>
            <person name="Muller H."/>
            <person name="Nicaud J.-M."/>
            <person name="Nikolski M."/>
            <person name="Oztas S."/>
            <person name="Ozier-Kalogeropoulos O."/>
            <person name="Pellenz S."/>
            <person name="Potier S."/>
            <person name="Richard G.-F."/>
            <person name="Straub M.-L."/>
            <person name="Suleau A."/>
            <person name="Swennen D."/>
            <person name="Tekaia F."/>
            <person name="Wesolowski-Louvel M."/>
            <person name="Westhof E."/>
            <person name="Wirth B."/>
            <person name="Zeniou-Meyer M."/>
            <person name="Zivanovic Y."/>
            <person name="Bolotin-Fukuhara M."/>
            <person name="Thierry A."/>
            <person name="Bouchier C."/>
            <person name="Caudron B."/>
            <person name="Scarpelli C."/>
            <person name="Gaillardin C."/>
            <person name="Weissenbach J."/>
            <person name="Wincker P."/>
            <person name="Souciet J.-L."/>
        </authorList>
    </citation>
    <scope>NUCLEOTIDE SEQUENCE [LARGE SCALE GENOMIC DNA]</scope>
    <source>
        <strain>ATCC 36239 / CBS 767 / BCRC 21394 / JCM 1990 / NBRC 0083 / IGC 2968</strain>
    </source>
</reference>
<accession>Q6BLS3</accession>